<feature type="chain" id="PRO_0000300266" description="TBC1 domain family member 3G">
    <location>
        <begin position="1"/>
        <end position="549"/>
    </location>
</feature>
<feature type="domain" description="Rab-GAP TBC" evidence="2">
    <location>
        <begin position="101"/>
        <end position="293"/>
    </location>
</feature>
<feature type="region of interest" description="Disordered" evidence="3">
    <location>
        <begin position="350"/>
        <end position="443"/>
    </location>
</feature>
<feature type="region of interest" description="Disordered" evidence="3">
    <location>
        <begin position="507"/>
        <end position="526"/>
    </location>
</feature>
<feature type="compositionally biased region" description="Low complexity" evidence="3">
    <location>
        <begin position="398"/>
        <end position="417"/>
    </location>
</feature>
<feature type="lipid moiety-binding region" description="S-palmitoyl cysteine" evidence="1">
    <location>
        <position position="318"/>
    </location>
</feature>
<feature type="lipid moiety-binding region" description="S-palmitoyl cysteine" evidence="1">
    <location>
        <position position="325"/>
    </location>
</feature>
<feature type="sequence conflict" description="In Ref. 1; BAF85033 and 3; AAH75809." evidence="4" ref="1 3">
    <original>K</original>
    <variation>R</variation>
    <location>
        <position position="155"/>
    </location>
</feature>
<feature type="sequence conflict" description="In Ref. 1; BAF85033 and 3; AAH75809." evidence="4" ref="1 3">
    <original>P</original>
    <variation>S</variation>
    <location>
        <position position="248"/>
    </location>
</feature>
<feature type="sequence conflict" description="In Ref. 1; BAF85033 and 3; AAH75809." evidence="4" ref="1 3">
    <original>G</original>
    <variation>R</variation>
    <location>
        <position position="276"/>
    </location>
</feature>
<feature type="sequence conflict" description="In Ref. 1; BAF85033 and 3; AAH75809." evidence="4" ref="1 3">
    <original>E</original>
    <variation>D</variation>
    <location>
        <position position="336"/>
    </location>
</feature>
<feature type="sequence conflict" description="In Ref. 1; BAF85033 and 3; AAH75809." evidence="4" ref="1 3">
    <original>S</original>
    <variation>G</variation>
    <location>
        <position position="510"/>
    </location>
</feature>
<dbReference type="EMBL" id="AK292344">
    <property type="protein sequence ID" value="BAF85033.1"/>
    <property type="molecule type" value="mRNA"/>
</dbReference>
<dbReference type="EMBL" id="AC233700">
    <property type="status" value="NOT_ANNOTATED_CDS"/>
    <property type="molecule type" value="Genomic_DNA"/>
</dbReference>
<dbReference type="EMBL" id="BC075809">
    <property type="protein sequence ID" value="AAH75809.1"/>
    <property type="molecule type" value="mRNA"/>
</dbReference>
<dbReference type="CCDS" id="CCDS74040.1"/>
<dbReference type="RefSeq" id="NP_001278391.1">
    <property type="nucleotide sequence ID" value="NM_001291462.2"/>
</dbReference>
<dbReference type="RefSeq" id="XP_047291045.1">
    <property type="nucleotide sequence ID" value="XM_047435089.1"/>
</dbReference>
<dbReference type="RefSeq" id="XP_047291046.1">
    <property type="nucleotide sequence ID" value="XM_047435090.1"/>
</dbReference>
<dbReference type="RefSeq" id="XP_054185186.1">
    <property type="nucleotide sequence ID" value="XM_054329211.1"/>
</dbReference>
<dbReference type="RefSeq" id="XP_054185187.1">
    <property type="nucleotide sequence ID" value="XM_054329212.1"/>
</dbReference>
<dbReference type="SMR" id="Q6DHY5"/>
<dbReference type="BioGRID" id="3190786">
    <property type="interactions" value="10"/>
</dbReference>
<dbReference type="FunCoup" id="Q6DHY5">
    <property type="interactions" value="52"/>
</dbReference>
<dbReference type="IntAct" id="Q6DHY5">
    <property type="interactions" value="19"/>
</dbReference>
<dbReference type="STRING" id="9606.ENSP00000456861"/>
<dbReference type="iPTMnet" id="Q6DHY5"/>
<dbReference type="PhosphoSitePlus" id="Q6DHY5"/>
<dbReference type="BioMuta" id="TBC1D3G"/>
<dbReference type="DMDM" id="300669617"/>
<dbReference type="jPOST" id="Q6DHY5"/>
<dbReference type="MassIVE" id="Q6DHY5"/>
<dbReference type="PaxDb" id="9606-ENSP00000456861"/>
<dbReference type="Antibodypedia" id="59372">
    <property type="antibodies" value="25 antibodies from 5 providers"/>
</dbReference>
<dbReference type="DNASU" id="101060321"/>
<dbReference type="Ensembl" id="ENST00000569055.2">
    <property type="protein sequence ID" value="ENSP00000456861.1"/>
    <property type="gene ID" value="ENSG00000260287.4"/>
</dbReference>
<dbReference type="Ensembl" id="ENST00000617387.3">
    <property type="protein sequence ID" value="ENSP00000482403.1"/>
    <property type="gene ID" value="ENSG00000275760.4"/>
</dbReference>
<dbReference type="GeneID" id="101060321"/>
<dbReference type="KEGG" id="hsa:101060321"/>
<dbReference type="MANE-Select" id="ENST00000569055.2">
    <property type="protein sequence ID" value="ENSP00000456861.1"/>
    <property type="RefSeq nucleotide sequence ID" value="NM_001291462.2"/>
    <property type="RefSeq protein sequence ID" value="NP_001278391.1"/>
</dbReference>
<dbReference type="UCSC" id="uc032fcb.2">
    <property type="organism name" value="human"/>
</dbReference>
<dbReference type="AGR" id="HGNC:29860"/>
<dbReference type="CTD" id="101060321"/>
<dbReference type="GeneCards" id="TBC1D3G"/>
<dbReference type="HGNC" id="HGNC:29860">
    <property type="gene designation" value="TBC1D3G"/>
</dbReference>
<dbReference type="HPA" id="ENSG00000260287">
    <property type="expression patterns" value="Tissue enriched (testis)"/>
</dbReference>
<dbReference type="MIM" id="610810">
    <property type="type" value="gene"/>
</dbReference>
<dbReference type="neXtProt" id="NX_Q6DHY5"/>
<dbReference type="PharmGKB" id="PA145007622"/>
<dbReference type="VEuPathDB" id="HostDB:ENSG00000260287"/>
<dbReference type="eggNOG" id="KOG1102">
    <property type="taxonomic scope" value="Eukaryota"/>
</dbReference>
<dbReference type="GeneTree" id="ENSGT00940000163624"/>
<dbReference type="HOGENOM" id="CLU_005350_10_5_1"/>
<dbReference type="InParanoid" id="Q6DHY5"/>
<dbReference type="OMA" id="MMFGERV"/>
<dbReference type="OrthoDB" id="9535050at2759"/>
<dbReference type="PAN-GO" id="Q6DHY5">
    <property type="GO annotations" value="2 GO annotations based on evolutionary models"/>
</dbReference>
<dbReference type="PhylomeDB" id="Q6DHY5"/>
<dbReference type="TreeFam" id="TF318099"/>
<dbReference type="PathwayCommons" id="Q6DHY5"/>
<dbReference type="SignaLink" id="Q6DHY5"/>
<dbReference type="BioGRID-ORCS" id="101060321">
    <property type="hits" value="36 hits in 181 CRISPR screens"/>
</dbReference>
<dbReference type="GenomeRNAi" id="101060321"/>
<dbReference type="Pharos" id="Q6DHY5">
    <property type="development level" value="Tdark"/>
</dbReference>
<dbReference type="PRO" id="PR:Q6DHY5"/>
<dbReference type="Proteomes" id="UP000005640">
    <property type="component" value="Chromosome 17"/>
</dbReference>
<dbReference type="RNAct" id="Q6DHY5">
    <property type="molecule type" value="protein"/>
</dbReference>
<dbReference type="Bgee" id="ENSG00000260287">
    <property type="expression patterns" value="Expressed in male germ line stem cell (sensu Vertebrata) in testis and 90 other cell types or tissues"/>
</dbReference>
<dbReference type="GO" id="GO:0005886">
    <property type="term" value="C:plasma membrane"/>
    <property type="evidence" value="ECO:0007669"/>
    <property type="project" value="UniProtKB-SubCell"/>
</dbReference>
<dbReference type="GO" id="GO:0005096">
    <property type="term" value="F:GTPase activator activity"/>
    <property type="evidence" value="ECO:0000318"/>
    <property type="project" value="GO_Central"/>
</dbReference>
<dbReference type="FunFam" id="1.10.10.750:FF:000001">
    <property type="entry name" value="TBC1 domain family member 10A"/>
    <property type="match status" value="1"/>
</dbReference>
<dbReference type="FunFam" id="1.10.8.270:FF:000016">
    <property type="entry name" value="TBC1 domain family member 2A"/>
    <property type="match status" value="1"/>
</dbReference>
<dbReference type="FunFam" id="1.10.472.80:FF:000058">
    <property type="entry name" value="Ubiquitin specific peptidase 6"/>
    <property type="match status" value="1"/>
</dbReference>
<dbReference type="Gene3D" id="1.10.8.270">
    <property type="entry name" value="putative rabgap domain of human tbc1 domain family member 14 like domains"/>
    <property type="match status" value="1"/>
</dbReference>
<dbReference type="Gene3D" id="1.10.10.750">
    <property type="entry name" value="Ypt/Rab-GAP domain of gyp1p, domain 1"/>
    <property type="match status" value="1"/>
</dbReference>
<dbReference type="Gene3D" id="1.10.472.80">
    <property type="entry name" value="Ypt/Rab-GAP domain of gyp1p, domain 3"/>
    <property type="match status" value="1"/>
</dbReference>
<dbReference type="InterPro" id="IPR000195">
    <property type="entry name" value="Rab-GAP-TBC_dom"/>
</dbReference>
<dbReference type="InterPro" id="IPR035969">
    <property type="entry name" value="Rab-GAP_TBC_sf"/>
</dbReference>
<dbReference type="InterPro" id="IPR050302">
    <property type="entry name" value="Rab_GAP_TBC_domain"/>
</dbReference>
<dbReference type="PANTHER" id="PTHR47219">
    <property type="entry name" value="RAB GTPASE-ACTIVATING PROTEIN 1-LIKE"/>
    <property type="match status" value="1"/>
</dbReference>
<dbReference type="PANTHER" id="PTHR47219:SF25">
    <property type="entry name" value="RAB-GAP TBC DOMAIN-CONTAINING PROTEIN"/>
    <property type="match status" value="1"/>
</dbReference>
<dbReference type="Pfam" id="PF00566">
    <property type="entry name" value="RabGAP-TBC"/>
    <property type="match status" value="1"/>
</dbReference>
<dbReference type="SMART" id="SM00164">
    <property type="entry name" value="TBC"/>
    <property type="match status" value="1"/>
</dbReference>
<dbReference type="SUPFAM" id="SSF47923">
    <property type="entry name" value="Ypt/Rab-GAP domain of gyp1p"/>
    <property type="match status" value="1"/>
</dbReference>
<dbReference type="PROSITE" id="PS50086">
    <property type="entry name" value="TBC_RABGAP"/>
    <property type="match status" value="1"/>
</dbReference>
<name>TBC3G_HUMAN</name>
<sequence length="549" mass="62231">MDVVEVAGSWWAQEREDIIMKYEKGHRAGLPEDKGPKPFRSYNNNVDHLGIVHETELPPLTAREAKQIRREISRKSKWVDMLGDWEKYKSSRKLIDRAYKGMPMNIRGPMWSVLLNIEEMKLKNPGRYQIMKEKGKRSSEHIQRIDRDISGTLRKHMFFRDRYGTKQRELLHILLAYEEYNPEVGYCRDLSHIAALFLLYLPEEDAFWALVQLLASERHSLQGFHSPNGGTVQGLQDQQEHVVATSQPKTMGHQDKKDLCGQCSPLGCLIRILIDGISLGLTLRLWDVYLVEGEQALMPITRIAFKVQQKRLTKTSRCGPWARFCNRFVDTWARDEDTVLKHLRASMKKLTRKQGDLPPPAKPEQGSSASRPVPASRGGKTLCKGDRQAPPGPPARFPRPIWSASPPRAPRSSTPCPGGAVREDTYPVGTQGVPSPALAQGGPQGSWRFLQWNSMPRLPTDLDVEGPWFRHYDFRQSCWVRAISQEDQLAPCWQAEHPAERVRSAFAAPSTDSDQGTPFRARDEQQCAPTSGPCLCGLHLESSQFPPGF</sequence>
<reference key="1">
    <citation type="journal article" date="2004" name="Nat. Genet.">
        <title>Complete sequencing and characterization of 21,243 full-length human cDNAs.</title>
        <authorList>
            <person name="Ota T."/>
            <person name="Suzuki Y."/>
            <person name="Nishikawa T."/>
            <person name="Otsuki T."/>
            <person name="Sugiyama T."/>
            <person name="Irie R."/>
            <person name="Wakamatsu A."/>
            <person name="Hayashi K."/>
            <person name="Sato H."/>
            <person name="Nagai K."/>
            <person name="Kimura K."/>
            <person name="Makita H."/>
            <person name="Sekine M."/>
            <person name="Obayashi M."/>
            <person name="Nishi T."/>
            <person name="Shibahara T."/>
            <person name="Tanaka T."/>
            <person name="Ishii S."/>
            <person name="Yamamoto J."/>
            <person name="Saito K."/>
            <person name="Kawai Y."/>
            <person name="Isono Y."/>
            <person name="Nakamura Y."/>
            <person name="Nagahari K."/>
            <person name="Murakami K."/>
            <person name="Yasuda T."/>
            <person name="Iwayanagi T."/>
            <person name="Wagatsuma M."/>
            <person name="Shiratori A."/>
            <person name="Sudo H."/>
            <person name="Hosoiri T."/>
            <person name="Kaku Y."/>
            <person name="Kodaira H."/>
            <person name="Kondo H."/>
            <person name="Sugawara M."/>
            <person name="Takahashi M."/>
            <person name="Kanda K."/>
            <person name="Yokoi T."/>
            <person name="Furuya T."/>
            <person name="Kikkawa E."/>
            <person name="Omura Y."/>
            <person name="Abe K."/>
            <person name="Kamihara K."/>
            <person name="Katsuta N."/>
            <person name="Sato K."/>
            <person name="Tanikawa M."/>
            <person name="Yamazaki M."/>
            <person name="Ninomiya K."/>
            <person name="Ishibashi T."/>
            <person name="Yamashita H."/>
            <person name="Murakawa K."/>
            <person name="Fujimori K."/>
            <person name="Tanai H."/>
            <person name="Kimata M."/>
            <person name="Watanabe M."/>
            <person name="Hiraoka S."/>
            <person name="Chiba Y."/>
            <person name="Ishida S."/>
            <person name="Ono Y."/>
            <person name="Takiguchi S."/>
            <person name="Watanabe S."/>
            <person name="Yosida M."/>
            <person name="Hotuta T."/>
            <person name="Kusano J."/>
            <person name="Kanehori K."/>
            <person name="Takahashi-Fujii A."/>
            <person name="Hara H."/>
            <person name="Tanase T.-O."/>
            <person name="Nomura Y."/>
            <person name="Togiya S."/>
            <person name="Komai F."/>
            <person name="Hara R."/>
            <person name="Takeuchi K."/>
            <person name="Arita M."/>
            <person name="Imose N."/>
            <person name="Musashino K."/>
            <person name="Yuuki H."/>
            <person name="Oshima A."/>
            <person name="Sasaki N."/>
            <person name="Aotsuka S."/>
            <person name="Yoshikawa Y."/>
            <person name="Matsunawa H."/>
            <person name="Ichihara T."/>
            <person name="Shiohata N."/>
            <person name="Sano S."/>
            <person name="Moriya S."/>
            <person name="Momiyama H."/>
            <person name="Satoh N."/>
            <person name="Takami S."/>
            <person name="Terashima Y."/>
            <person name="Suzuki O."/>
            <person name="Nakagawa S."/>
            <person name="Senoh A."/>
            <person name="Mizoguchi H."/>
            <person name="Goto Y."/>
            <person name="Shimizu F."/>
            <person name="Wakebe H."/>
            <person name="Hishigaki H."/>
            <person name="Watanabe T."/>
            <person name="Sugiyama A."/>
            <person name="Takemoto M."/>
            <person name="Kawakami B."/>
            <person name="Yamazaki M."/>
            <person name="Watanabe K."/>
            <person name="Kumagai A."/>
            <person name="Itakura S."/>
            <person name="Fukuzumi Y."/>
            <person name="Fujimori Y."/>
            <person name="Komiyama M."/>
            <person name="Tashiro H."/>
            <person name="Tanigami A."/>
            <person name="Fujiwara T."/>
            <person name="Ono T."/>
            <person name="Yamada K."/>
            <person name="Fujii Y."/>
            <person name="Ozaki K."/>
            <person name="Hirao M."/>
            <person name="Ohmori Y."/>
            <person name="Kawabata A."/>
            <person name="Hikiji T."/>
            <person name="Kobatake N."/>
            <person name="Inagaki H."/>
            <person name="Ikema Y."/>
            <person name="Okamoto S."/>
            <person name="Okitani R."/>
            <person name="Kawakami T."/>
            <person name="Noguchi S."/>
            <person name="Itoh T."/>
            <person name="Shigeta K."/>
            <person name="Senba T."/>
            <person name="Matsumura K."/>
            <person name="Nakajima Y."/>
            <person name="Mizuno T."/>
            <person name="Morinaga M."/>
            <person name="Sasaki M."/>
            <person name="Togashi T."/>
            <person name="Oyama M."/>
            <person name="Hata H."/>
            <person name="Watanabe M."/>
            <person name="Komatsu T."/>
            <person name="Mizushima-Sugano J."/>
            <person name="Satoh T."/>
            <person name="Shirai Y."/>
            <person name="Takahashi Y."/>
            <person name="Nakagawa K."/>
            <person name="Okumura K."/>
            <person name="Nagase T."/>
            <person name="Nomura N."/>
            <person name="Kikuchi H."/>
            <person name="Masuho Y."/>
            <person name="Yamashita R."/>
            <person name="Nakai K."/>
            <person name="Yada T."/>
            <person name="Nakamura Y."/>
            <person name="Ohara O."/>
            <person name="Isogai T."/>
            <person name="Sugano S."/>
        </authorList>
    </citation>
    <scope>NUCLEOTIDE SEQUENCE [LARGE SCALE MRNA]</scope>
    <source>
        <tissue>Testis</tissue>
    </source>
</reference>
<reference key="2">
    <citation type="journal article" date="2006" name="Nature">
        <title>DNA sequence of human chromosome 17 and analysis of rearrangement in the human lineage.</title>
        <authorList>
            <person name="Zody M.C."/>
            <person name="Garber M."/>
            <person name="Adams D.J."/>
            <person name="Sharpe T."/>
            <person name="Harrow J."/>
            <person name="Lupski J.R."/>
            <person name="Nicholson C."/>
            <person name="Searle S.M."/>
            <person name="Wilming L."/>
            <person name="Young S.K."/>
            <person name="Abouelleil A."/>
            <person name="Allen N.R."/>
            <person name="Bi W."/>
            <person name="Bloom T."/>
            <person name="Borowsky M.L."/>
            <person name="Bugalter B.E."/>
            <person name="Butler J."/>
            <person name="Chang J.L."/>
            <person name="Chen C.-K."/>
            <person name="Cook A."/>
            <person name="Corum B."/>
            <person name="Cuomo C.A."/>
            <person name="de Jong P.J."/>
            <person name="DeCaprio D."/>
            <person name="Dewar K."/>
            <person name="FitzGerald M."/>
            <person name="Gilbert J."/>
            <person name="Gibson R."/>
            <person name="Gnerre S."/>
            <person name="Goldstein S."/>
            <person name="Grafham D.V."/>
            <person name="Grocock R."/>
            <person name="Hafez N."/>
            <person name="Hagopian D.S."/>
            <person name="Hart E."/>
            <person name="Norman C.H."/>
            <person name="Humphray S."/>
            <person name="Jaffe D.B."/>
            <person name="Jones M."/>
            <person name="Kamal M."/>
            <person name="Khodiyar V.K."/>
            <person name="LaButti K."/>
            <person name="Laird G."/>
            <person name="Lehoczky J."/>
            <person name="Liu X."/>
            <person name="Lokyitsang T."/>
            <person name="Loveland J."/>
            <person name="Lui A."/>
            <person name="Macdonald P."/>
            <person name="Major J.E."/>
            <person name="Matthews L."/>
            <person name="Mauceli E."/>
            <person name="McCarroll S.A."/>
            <person name="Mihalev A.H."/>
            <person name="Mudge J."/>
            <person name="Nguyen C."/>
            <person name="Nicol R."/>
            <person name="O'Leary S.B."/>
            <person name="Osoegawa K."/>
            <person name="Schwartz D.C."/>
            <person name="Shaw-Smith C."/>
            <person name="Stankiewicz P."/>
            <person name="Steward C."/>
            <person name="Swarbreck D."/>
            <person name="Venkataraman V."/>
            <person name="Whittaker C.A."/>
            <person name="Yang X."/>
            <person name="Zimmer A.R."/>
            <person name="Bradley A."/>
            <person name="Hubbard T."/>
            <person name="Birren B.W."/>
            <person name="Rogers J."/>
            <person name="Lander E.S."/>
            <person name="Nusbaum C."/>
        </authorList>
    </citation>
    <scope>NUCLEOTIDE SEQUENCE [LARGE SCALE GENOMIC DNA]</scope>
</reference>
<reference key="3">
    <citation type="journal article" date="2004" name="Genome Res.">
        <title>The status, quality, and expansion of the NIH full-length cDNA project: the Mammalian Gene Collection (MGC).</title>
        <authorList>
            <consortium name="The MGC Project Team"/>
        </authorList>
    </citation>
    <scope>NUCLEOTIDE SEQUENCE [LARGE SCALE MRNA]</scope>
    <source>
        <tissue>Brain</tissue>
    </source>
</reference>
<reference key="4">
    <citation type="journal article" date="2010" name="Science">
        <title>Diversity of human copy number variation and multicopy genes.</title>
        <authorList>
            <person name="Sudmant P.H."/>
            <person name="Kitzman J.O."/>
            <person name="Antonacci F."/>
            <person name="Alkan C."/>
            <person name="Malig M."/>
            <person name="Tsalenko A."/>
            <person name="Sampas N."/>
            <person name="Bruhn L."/>
            <person name="Shendure J."/>
            <person name="Eichler E.E."/>
        </authorList>
    </citation>
    <scope>MISCELLANEOUS</scope>
    <scope>COPY NUMBER VARIATION</scope>
</reference>
<proteinExistence type="evidence at protein level"/>
<protein>
    <recommendedName>
        <fullName>TBC1 domain family member 3G</fullName>
    </recommendedName>
</protein>
<organism>
    <name type="scientific">Homo sapiens</name>
    <name type="common">Human</name>
    <dbReference type="NCBI Taxonomy" id="9606"/>
    <lineage>
        <taxon>Eukaryota</taxon>
        <taxon>Metazoa</taxon>
        <taxon>Chordata</taxon>
        <taxon>Craniata</taxon>
        <taxon>Vertebrata</taxon>
        <taxon>Euteleostomi</taxon>
        <taxon>Mammalia</taxon>
        <taxon>Eutheria</taxon>
        <taxon>Euarchontoglires</taxon>
        <taxon>Primates</taxon>
        <taxon>Haplorrhini</taxon>
        <taxon>Catarrhini</taxon>
        <taxon>Hominidae</taxon>
        <taxon>Homo</taxon>
    </lineage>
</organism>
<gene>
    <name type="primary">TBC1D3G</name>
</gene>
<evidence type="ECO:0000250" key="1"/>
<evidence type="ECO:0000255" key="2">
    <source>
        <dbReference type="PROSITE-ProRule" id="PRU00163"/>
    </source>
</evidence>
<evidence type="ECO:0000256" key="3">
    <source>
        <dbReference type="SAM" id="MobiDB-lite"/>
    </source>
</evidence>
<evidence type="ECO:0000305" key="4"/>
<comment type="function">
    <text evidence="1">Acts as a GTPase activating protein for RAB5. Does not act on RAB4 or RAB11 (By similarity).</text>
</comment>
<comment type="interaction">
    <interactant intactId="EBI-13092532">
        <id>Q6DHY5</id>
    </interactant>
    <interactant intactId="EBI-747185">
        <id>O95817</id>
        <label>BAG3</label>
    </interactant>
    <organismsDiffer>false</organismsDiffer>
    <experiments>3</experiments>
</comment>
<comment type="interaction">
    <interactant intactId="EBI-13092532">
        <id>Q6DHY5</id>
    </interactant>
    <interactant intactId="EBI-2949658">
        <id>O95429</id>
        <label>BAG4</label>
    </interactant>
    <organismsDiffer>false</organismsDiffer>
    <experiments>3</experiments>
</comment>
<comment type="interaction">
    <interactant intactId="EBI-13092532">
        <id>Q6DHY5</id>
    </interactant>
    <interactant intactId="EBI-744104">
        <id>P55040</id>
        <label>GEM</label>
    </interactant>
    <organismsDiffer>false</organismsDiffer>
    <experiments>3</experiments>
</comment>
<comment type="interaction">
    <interactant intactId="EBI-13092532">
        <id>Q6DHY5</id>
    </interactant>
    <interactant intactId="EBI-401755">
        <id>P62993</id>
        <label>GRB2</label>
    </interactant>
    <organismsDiffer>false</organismsDiffer>
    <experiments>3</experiments>
</comment>
<comment type="interaction">
    <interactant intactId="EBI-13092532">
        <id>Q6DHY5</id>
    </interactant>
    <interactant intactId="EBI-740290">
        <id>Q969Y2</id>
        <label>GTPBP3</label>
    </interactant>
    <organismsDiffer>false</organismsDiffer>
    <experiments>3</experiments>
</comment>
<comment type="interaction">
    <interactant intactId="EBI-13092532">
        <id>Q6DHY5</id>
    </interactant>
    <interactant intactId="EBI-724076">
        <id>Q99750</id>
        <label>MDFI</label>
    </interactant>
    <organismsDiffer>false</organismsDiffer>
    <experiments>3</experiments>
</comment>
<comment type="interaction">
    <interactant intactId="EBI-13092532">
        <id>Q6DHY5</id>
    </interactant>
    <interactant intactId="EBI-357648">
        <id>Q13200</id>
        <label>PSMD2</label>
    </interactant>
    <organismsDiffer>false</organismsDiffer>
    <experiments>3</experiments>
</comment>
<comment type="interaction">
    <interactant intactId="EBI-13092532">
        <id>Q6DHY5</id>
    </interactant>
    <interactant intactId="EBI-527853">
        <id>Q9UGI0</id>
        <label>ZRANB1</label>
    </interactant>
    <organismsDiffer>false</organismsDiffer>
    <experiments>6</experiments>
</comment>
<comment type="subcellular location">
    <subcellularLocation>
        <location evidence="1">Cell membrane</location>
        <topology evidence="1">Lipid-anchor</topology>
    </subcellularLocation>
    <text evidence="1">Associated with lipid rafts.</text>
</comment>
<comment type="PTM">
    <text evidence="1">Ubiquitinated by a CUL7-based E3 ligase, which leads to proteasomal degradation.</text>
</comment>
<comment type="PTM">
    <text evidence="1">Palmitoylation is required for membrane localization and protects TBC1D3 from ubiquitination.</text>
</comment>
<comment type="miscellaneous">
    <text evidence="4">TBC1D3 is encoded by a collection of very similar paralogs with multiple copies of each paralog, some human genomes encoding well over 50 copies depending on ethnic origin of the donor.</text>
</comment>
<accession>Q6DHY5</accession>
<accession>A8K8H9</accession>
<keyword id="KW-1003">Cell membrane</keyword>
<keyword id="KW-0343">GTPase activation</keyword>
<keyword id="KW-0449">Lipoprotein</keyword>
<keyword id="KW-0472">Membrane</keyword>
<keyword id="KW-0564">Palmitate</keyword>
<keyword id="KW-1185">Reference proteome</keyword>
<keyword id="KW-0832">Ubl conjugation</keyword>